<sequence>MSAAIEKETGMLDVGKHCAYCRQLDFLPFHCSFCNEDFCSNHRLKEDHHCRWLLEHEEVHKTEKSPSKSRDGSSSNDEAYFKSLLPERASVRIQRVSETREPLRGSNTAKVSSTLNSKTLDKIFKFFQRNEKRKSNNKSKKNFGSSSNKIIQLANLKKIAKGDPKIPMQNRIYIWCYLVDGDETDIAKEDTRMPLYINKMWPVGRAMDYLSIQLNVKSSTLTNSSSNDKFQLCKLKEGKQVSFYNIGASLRVTNEIKDLDTLYLVHNNADEKSN</sequence>
<evidence type="ECO:0000255" key="1">
    <source>
        <dbReference type="PROSITE-ProRule" id="PRU00449"/>
    </source>
</evidence>
<evidence type="ECO:0000269" key="2">
    <source>
    </source>
</evidence>
<evidence type="ECO:0000269" key="3">
    <source>
    </source>
</evidence>
<evidence type="ECO:0000269" key="4">
    <source>
    </source>
</evidence>
<evidence type="ECO:0000269" key="5">
    <source>
    </source>
</evidence>
<evidence type="ECO:0000269" key="6">
    <source>
    </source>
</evidence>
<evidence type="ECO:0000303" key="7">
    <source>
    </source>
</evidence>
<evidence type="ECO:0000312" key="8">
    <source>
        <dbReference type="SGD" id="S000005099"/>
    </source>
</evidence>
<evidence type="ECO:0007744" key="9">
    <source>
    </source>
</evidence>
<evidence type="ECO:0007744" key="10">
    <source>
    </source>
</evidence>
<evidence type="ECO:0007829" key="11">
    <source>
        <dbReference type="PDB" id="5IJ4"/>
    </source>
</evidence>
<gene>
    <name evidence="7" type="primary">CUZ1</name>
    <name evidence="8" type="ordered locus">YNL155W</name>
    <name type="ORF">N1751</name>
</gene>
<dbReference type="EMBL" id="X92517">
    <property type="protein sequence ID" value="CAA63284.1"/>
    <property type="molecule type" value="Genomic_DNA"/>
</dbReference>
<dbReference type="EMBL" id="Z71431">
    <property type="protein sequence ID" value="CAA96042.1"/>
    <property type="molecule type" value="Genomic_DNA"/>
</dbReference>
<dbReference type="EMBL" id="AY692693">
    <property type="protein sequence ID" value="AAT92712.1"/>
    <property type="molecule type" value="Genomic_DNA"/>
</dbReference>
<dbReference type="EMBL" id="BK006947">
    <property type="protein sequence ID" value="DAA10394.1"/>
    <property type="molecule type" value="Genomic_DNA"/>
</dbReference>
<dbReference type="PIR" id="S60972">
    <property type="entry name" value="S60972"/>
</dbReference>
<dbReference type="RefSeq" id="NP_014244.1">
    <property type="nucleotide sequence ID" value="NM_001182993.1"/>
</dbReference>
<dbReference type="PDB" id="5IJ4">
    <property type="method" value="NMR"/>
    <property type="chains" value="A=11-59"/>
</dbReference>
<dbReference type="PDBsum" id="5IJ4"/>
<dbReference type="SMR" id="P53899"/>
<dbReference type="BioGRID" id="35674">
    <property type="interactions" value="120"/>
</dbReference>
<dbReference type="DIP" id="DIP-1796N"/>
<dbReference type="FunCoup" id="P53899">
    <property type="interactions" value="266"/>
</dbReference>
<dbReference type="IntAct" id="P53899">
    <property type="interactions" value="31"/>
</dbReference>
<dbReference type="MINT" id="P53899"/>
<dbReference type="STRING" id="4932.YNL155W"/>
<dbReference type="iPTMnet" id="P53899"/>
<dbReference type="PaxDb" id="4932-YNL155W"/>
<dbReference type="PeptideAtlas" id="P53899"/>
<dbReference type="EnsemblFungi" id="YNL155W_mRNA">
    <property type="protein sequence ID" value="YNL155W"/>
    <property type="gene ID" value="YNL155W"/>
</dbReference>
<dbReference type="GeneID" id="855567"/>
<dbReference type="KEGG" id="sce:YNL155W"/>
<dbReference type="AGR" id="SGD:S000005099"/>
<dbReference type="SGD" id="S000005099">
    <property type="gene designation" value="CUZ1"/>
</dbReference>
<dbReference type="VEuPathDB" id="FungiDB:YNL155W"/>
<dbReference type="eggNOG" id="KOG3183">
    <property type="taxonomic scope" value="Eukaryota"/>
</dbReference>
<dbReference type="HOGENOM" id="CLU_052358_2_1_1"/>
<dbReference type="InParanoid" id="P53899"/>
<dbReference type="OMA" id="RQYCLKH"/>
<dbReference type="OrthoDB" id="431929at2759"/>
<dbReference type="BioCyc" id="YEAST:G3O-33171-MONOMER"/>
<dbReference type="BioGRID-ORCS" id="855567">
    <property type="hits" value="0 hits in 10 CRISPR screens"/>
</dbReference>
<dbReference type="PRO" id="PR:P53899"/>
<dbReference type="Proteomes" id="UP000002311">
    <property type="component" value="Chromosome XIV"/>
</dbReference>
<dbReference type="RNAct" id="P53899">
    <property type="molecule type" value="protein"/>
</dbReference>
<dbReference type="GO" id="GO:0005737">
    <property type="term" value="C:cytoplasm"/>
    <property type="evidence" value="ECO:0007005"/>
    <property type="project" value="SGD"/>
</dbReference>
<dbReference type="GO" id="GO:0005634">
    <property type="term" value="C:nucleus"/>
    <property type="evidence" value="ECO:0007005"/>
    <property type="project" value="SGD"/>
</dbReference>
<dbReference type="GO" id="GO:0070628">
    <property type="term" value="F:proteasome binding"/>
    <property type="evidence" value="ECO:0000314"/>
    <property type="project" value="SGD"/>
</dbReference>
<dbReference type="GO" id="GO:0008270">
    <property type="term" value="F:zinc ion binding"/>
    <property type="evidence" value="ECO:0007669"/>
    <property type="project" value="UniProtKB-KW"/>
</dbReference>
<dbReference type="GO" id="GO:0071243">
    <property type="term" value="P:cellular response to arsenic-containing substance"/>
    <property type="evidence" value="ECO:0000315"/>
    <property type="project" value="SGD"/>
</dbReference>
<dbReference type="GO" id="GO:1903843">
    <property type="term" value="P:cellular response to arsenite ion"/>
    <property type="evidence" value="ECO:0000315"/>
    <property type="project" value="UniProtKB"/>
</dbReference>
<dbReference type="GO" id="GO:0043161">
    <property type="term" value="P:proteasome-mediated ubiquitin-dependent protein catabolic process"/>
    <property type="evidence" value="ECO:0000315"/>
    <property type="project" value="SGD"/>
</dbReference>
<dbReference type="GO" id="GO:0035617">
    <property type="term" value="P:stress granule disassembly"/>
    <property type="evidence" value="ECO:0000315"/>
    <property type="project" value="UniProtKB"/>
</dbReference>
<dbReference type="FunFam" id="4.10.1110.10:FF:000006">
    <property type="entry name" value="Zinc finger AN1-type containing 1"/>
    <property type="match status" value="1"/>
</dbReference>
<dbReference type="Gene3D" id="4.10.1110.10">
    <property type="entry name" value="AN1-like Zinc finger"/>
    <property type="match status" value="1"/>
</dbReference>
<dbReference type="InterPro" id="IPR035896">
    <property type="entry name" value="AN1-like_Znf"/>
</dbReference>
<dbReference type="InterPro" id="IPR000058">
    <property type="entry name" value="Znf_AN1"/>
</dbReference>
<dbReference type="PANTHER" id="PTHR14677">
    <property type="entry name" value="ARSENITE INDUCUBLE RNA ASSOCIATED PROTEIN AIP-1-RELATED"/>
    <property type="match status" value="1"/>
</dbReference>
<dbReference type="PANTHER" id="PTHR14677:SF40">
    <property type="entry name" value="CDC48-ASSOCIATED UBIQUITIN-LIKE_ZINC FINGER PROTEIN 1"/>
    <property type="match status" value="1"/>
</dbReference>
<dbReference type="Pfam" id="PF25327">
    <property type="entry name" value="UBL_ZFAND1"/>
    <property type="match status" value="1"/>
</dbReference>
<dbReference type="Pfam" id="PF01428">
    <property type="entry name" value="zf-AN1"/>
    <property type="match status" value="1"/>
</dbReference>
<dbReference type="SMART" id="SM00154">
    <property type="entry name" value="ZnF_AN1"/>
    <property type="match status" value="1"/>
</dbReference>
<dbReference type="SUPFAM" id="SSF118310">
    <property type="entry name" value="AN1-like Zinc finger"/>
    <property type="match status" value="1"/>
</dbReference>
<dbReference type="PROSITE" id="PS51039">
    <property type="entry name" value="ZF_AN1"/>
    <property type="match status" value="1"/>
</dbReference>
<protein>
    <recommendedName>
        <fullName evidence="7">CDC48-associated ubiquitin-like/zinc finger protein 1</fullName>
        <shortName evidence="7">CDC48-associated UBL/Zn-finger protein 1</shortName>
    </recommendedName>
</protein>
<organism>
    <name type="scientific">Saccharomyces cerevisiae (strain ATCC 204508 / S288c)</name>
    <name type="common">Baker's yeast</name>
    <dbReference type="NCBI Taxonomy" id="559292"/>
    <lineage>
        <taxon>Eukaryota</taxon>
        <taxon>Fungi</taxon>
        <taxon>Dikarya</taxon>
        <taxon>Ascomycota</taxon>
        <taxon>Saccharomycotina</taxon>
        <taxon>Saccharomycetes</taxon>
        <taxon>Saccharomycetales</taxon>
        <taxon>Saccharomycetaceae</taxon>
        <taxon>Saccharomyces</taxon>
    </lineage>
</organism>
<reference key="1">
    <citation type="journal article" date="1996" name="Yeast">
        <title>The sequence of 36.8 kb from the left arm of chromosome XIV reveals 24 complete open reading frames: 18 correspond to new genes, one of which encodes a protein similar to the human myotonic dystrophy kinase.</title>
        <authorList>
            <person name="Nasr F."/>
            <person name="Becam A.-M."/>
            <person name="Herbert C.J."/>
        </authorList>
    </citation>
    <scope>NUCLEOTIDE SEQUENCE [GENOMIC DNA]</scope>
    <source>
        <strain>ATCC 96604 / S288c / FY1679</strain>
    </source>
</reference>
<reference key="2">
    <citation type="journal article" date="1997" name="Nature">
        <title>The nucleotide sequence of Saccharomyces cerevisiae chromosome XIV and its evolutionary implications.</title>
        <authorList>
            <person name="Philippsen P."/>
            <person name="Kleine K."/>
            <person name="Poehlmann R."/>
            <person name="Duesterhoeft A."/>
            <person name="Hamberg K."/>
            <person name="Hegemann J.H."/>
            <person name="Obermaier B."/>
            <person name="Urrestarazu L.A."/>
            <person name="Aert R."/>
            <person name="Albermann K."/>
            <person name="Altmann R."/>
            <person name="Andre B."/>
            <person name="Baladron V."/>
            <person name="Ballesta J.P.G."/>
            <person name="Becam A.-M."/>
            <person name="Beinhauer J.D."/>
            <person name="Boskovic J."/>
            <person name="Buitrago M.J."/>
            <person name="Bussereau F."/>
            <person name="Coster F."/>
            <person name="Crouzet M."/>
            <person name="D'Angelo M."/>
            <person name="Dal Pero F."/>
            <person name="De Antoni A."/>
            <person name="del Rey F."/>
            <person name="Doignon F."/>
            <person name="Domdey H."/>
            <person name="Dubois E."/>
            <person name="Fiedler T.A."/>
            <person name="Fleig U."/>
            <person name="Floeth M."/>
            <person name="Fritz C."/>
            <person name="Gaillardin C."/>
            <person name="Garcia-Cantalejo J.M."/>
            <person name="Glansdorff N."/>
            <person name="Goffeau A."/>
            <person name="Gueldener U."/>
            <person name="Herbert C.J."/>
            <person name="Heumann K."/>
            <person name="Heuss-Neitzel D."/>
            <person name="Hilbert H."/>
            <person name="Hinni K."/>
            <person name="Iraqui Houssaini I."/>
            <person name="Jacquet M."/>
            <person name="Jimenez A."/>
            <person name="Jonniaux J.-L."/>
            <person name="Karpfinger-Hartl L."/>
            <person name="Lanfranchi G."/>
            <person name="Lepingle A."/>
            <person name="Levesque H."/>
            <person name="Lyck R."/>
            <person name="Maftahi M."/>
            <person name="Mallet L."/>
            <person name="Maurer C.T.C."/>
            <person name="Messenguy F."/>
            <person name="Mewes H.-W."/>
            <person name="Moestl D."/>
            <person name="Nasr F."/>
            <person name="Nicaud J.-M."/>
            <person name="Niedenthal R.K."/>
            <person name="Pandolfo D."/>
            <person name="Pierard A."/>
            <person name="Piravandi E."/>
            <person name="Planta R.J."/>
            <person name="Pohl T.M."/>
            <person name="Purnelle B."/>
            <person name="Rebischung C."/>
            <person name="Remacha M.A."/>
            <person name="Revuelta J.L."/>
            <person name="Rinke M."/>
            <person name="Saiz J.E."/>
            <person name="Sartorello F."/>
            <person name="Scherens B."/>
            <person name="Sen-Gupta M."/>
            <person name="Soler-Mira A."/>
            <person name="Urbanus J.H.M."/>
            <person name="Valle G."/>
            <person name="Van Dyck L."/>
            <person name="Verhasselt P."/>
            <person name="Vierendeels F."/>
            <person name="Vissers S."/>
            <person name="Voet M."/>
            <person name="Volckaert G."/>
            <person name="Wach A."/>
            <person name="Wambutt R."/>
            <person name="Wedler H."/>
            <person name="Zollner A."/>
            <person name="Hani J."/>
        </authorList>
    </citation>
    <scope>NUCLEOTIDE SEQUENCE [LARGE SCALE GENOMIC DNA]</scope>
    <source>
        <strain>ATCC 204508 / S288c</strain>
    </source>
</reference>
<reference key="3">
    <citation type="journal article" date="2014" name="G3 (Bethesda)">
        <title>The reference genome sequence of Saccharomyces cerevisiae: Then and now.</title>
        <authorList>
            <person name="Engel S.R."/>
            <person name="Dietrich F.S."/>
            <person name="Fisk D.G."/>
            <person name="Binkley G."/>
            <person name="Balakrishnan R."/>
            <person name="Costanzo M.C."/>
            <person name="Dwight S.S."/>
            <person name="Hitz B.C."/>
            <person name="Karra K."/>
            <person name="Nash R.S."/>
            <person name="Weng S."/>
            <person name="Wong E.D."/>
            <person name="Lloyd P."/>
            <person name="Skrzypek M.S."/>
            <person name="Miyasato S.R."/>
            <person name="Simison M."/>
            <person name="Cherry J.M."/>
        </authorList>
    </citation>
    <scope>GENOME REANNOTATION</scope>
    <source>
        <strain>ATCC 204508 / S288c</strain>
    </source>
</reference>
<reference key="4">
    <citation type="journal article" date="2007" name="Genome Res.">
        <title>Approaching a complete repository of sequence-verified protein-encoding clones for Saccharomyces cerevisiae.</title>
        <authorList>
            <person name="Hu Y."/>
            <person name="Rolfs A."/>
            <person name="Bhullar B."/>
            <person name="Murthy T.V.S."/>
            <person name="Zhu C."/>
            <person name="Berger M.F."/>
            <person name="Camargo A.A."/>
            <person name="Kelley F."/>
            <person name="McCarron S."/>
            <person name="Jepson D."/>
            <person name="Richardson A."/>
            <person name="Raphael J."/>
            <person name="Moreira D."/>
            <person name="Taycher E."/>
            <person name="Zuo D."/>
            <person name="Mohr S."/>
            <person name="Kane M.F."/>
            <person name="Williamson J."/>
            <person name="Simpson A.J.G."/>
            <person name="Bulyk M.L."/>
            <person name="Harlow E."/>
            <person name="Marsischky G."/>
            <person name="Kolodner R.D."/>
            <person name="LaBaer J."/>
        </authorList>
    </citation>
    <scope>NUCLEOTIDE SEQUENCE [GENOMIC DNA]</scope>
    <source>
        <strain>ATCC 204508 / S288c</strain>
    </source>
</reference>
<reference key="5">
    <citation type="journal article" date="2003" name="Nature">
        <title>Global analysis of protein localization in budding yeast.</title>
        <authorList>
            <person name="Huh W.-K."/>
            <person name="Falvo J.V."/>
            <person name="Gerke L.C."/>
            <person name="Carroll A.S."/>
            <person name="Howson R.W."/>
            <person name="Weissman J.S."/>
            <person name="O'Shea E.K."/>
        </authorList>
    </citation>
    <scope>SUBCELLULAR LOCATION [LARGE SCALE ANALYSIS]</scope>
</reference>
<reference key="6">
    <citation type="journal article" date="2003" name="Nature">
        <title>Global analysis of protein expression in yeast.</title>
        <authorList>
            <person name="Ghaemmaghami S."/>
            <person name="Huh W.-K."/>
            <person name="Bower K."/>
            <person name="Howson R.W."/>
            <person name="Belle A."/>
            <person name="Dephoure N."/>
            <person name="O'Shea E.K."/>
            <person name="Weissman J.S."/>
        </authorList>
    </citation>
    <scope>LEVEL OF PROTEIN EXPRESSION [LARGE SCALE ANALYSIS]</scope>
</reference>
<reference key="7">
    <citation type="journal article" date="2008" name="Mol. Cell. Proteomics">
        <title>A multidimensional chromatography technology for in-depth phosphoproteome analysis.</title>
        <authorList>
            <person name="Albuquerque C.P."/>
            <person name="Smolka M.B."/>
            <person name="Payne S.H."/>
            <person name="Bafna V."/>
            <person name="Eng J."/>
            <person name="Zhou H."/>
        </authorList>
    </citation>
    <scope>PHOSPHORYLATION [LARGE SCALE ANALYSIS] AT SER-273</scope>
    <scope>IDENTIFICATION BY MASS SPECTROMETRY [LARGE SCALE ANALYSIS]</scope>
</reference>
<reference key="8">
    <citation type="journal article" date="2009" name="Science">
        <title>Global analysis of Cdk1 substrate phosphorylation sites provides insights into evolution.</title>
        <authorList>
            <person name="Holt L.J."/>
            <person name="Tuch B.B."/>
            <person name="Villen J."/>
            <person name="Johnson A.D."/>
            <person name="Gygi S.P."/>
            <person name="Morgan D.O."/>
        </authorList>
    </citation>
    <scope>PHOSPHORYLATION [LARGE SCALE ANALYSIS] AT SER-273</scope>
    <scope>IDENTIFICATION BY MASS SPECTROMETRY [LARGE SCALE ANALYSIS]</scope>
</reference>
<reference key="9">
    <citation type="journal article" date="2013" name="J. Biol. Chem.">
        <title>A conserved protein with AN1 zinc finger and ubiquitin-like domains modulates Cdc48 (p97) function in the ubiquitin-proteasome pathway.</title>
        <authorList>
            <person name="Sa-Moura B."/>
            <person name="Funakoshi M."/>
            <person name="Tomko R.J. Jr."/>
            <person name="Dohmen R.J."/>
            <person name="Wu Z."/>
            <person name="Peng J."/>
            <person name="Hochstrasser M."/>
        </authorList>
    </citation>
    <scope>FUNCTION</scope>
    <scope>INTERACTION WITH CDC48 AND THE PROTEASOME</scope>
</reference>
<reference key="10">
    <citation type="journal article" date="2014" name="J. Biol. Chem.">
        <title>Cuz1/Ynl155w, a zinc-dependent ubiquitin-binding protein, protects cells from metalloid-induced proteotoxicity.</title>
        <authorList>
            <person name="Hanna J."/>
            <person name="Waterman D."/>
            <person name="Isasa M."/>
            <person name="Elsasser S."/>
            <person name="Shi Y."/>
            <person name="Gygi S."/>
            <person name="Finley D."/>
        </authorList>
    </citation>
    <scope>FUNCTION</scope>
    <scope>INTERACTION WITH CDC48; RPN2; THE PROTEASOME AND UBIQUITINATED PROTEINS</scope>
    <scope>INDUCTION BY RPN4</scope>
</reference>
<reference key="11">
    <citation type="journal article" date="2018" name="Mol. Cell">
        <title>ZFAND1 recruits p97 and the 26S proteasome to promote the clearance of arsenite-induced stress granules.</title>
        <authorList>
            <person name="Turakhiya A."/>
            <person name="Meyer S.R."/>
            <person name="Marincola G."/>
            <person name="Boehm S."/>
            <person name="Vanselow J.T."/>
            <person name="Schlosser A."/>
            <person name="Hofmann K."/>
            <person name="Buchberger A."/>
        </authorList>
    </citation>
    <scope>FUNCTION</scope>
</reference>
<comment type="function">
    <text evidence="4 5 6">Promotes efficient arsenite-induced clearance of stress granules (SGs) (PubMed:29804830). May have a role in the ubiquitin-proteasome system (UPS) protecting cells from metalloid-induced proteotoxicity (PubMed:24121501, PubMed:24297164).</text>
</comment>
<comment type="subunit">
    <text evidence="4 5">Interacts (via its ubiquitin-like domain) with CDC48 (via N-terminus). Associates with the 26S proteasome. Specifically interacts with the regulatory particle (RP) subunit RPN2. Exposure to arsenite, a known inducer of protein misfolding resulting in accumulation of polyubiquitinated conjugates, enhances the association with the proteoasome. Binds to ubiquitinated proteins conjugated to a 4 or more molecule ubiquitin chain. Binding to ubiquitinated proteins is zinc-dependent.</text>
</comment>
<comment type="subcellular location">
    <subcellularLocation>
        <location evidence="2">Cytoplasm</location>
    </subcellularLocation>
    <subcellularLocation>
        <location evidence="2">Nucleus</location>
    </subcellularLocation>
</comment>
<comment type="induction">
    <text evidence="5">By transcriptional activator RPN4.</text>
</comment>
<comment type="miscellaneous">
    <text evidence="3">Present with 4280 molecules/cell in log phase SD medium.</text>
</comment>
<proteinExistence type="evidence at protein level"/>
<feature type="chain" id="PRO_0000203418" description="CDC48-associated ubiquitin-like/zinc finger protein 1">
    <location>
        <begin position="1"/>
        <end position="274"/>
    </location>
</feature>
<feature type="zinc finger region" description="AN1-type" evidence="1">
    <location>
        <begin position="12"/>
        <end position="58"/>
    </location>
</feature>
<feature type="region of interest" description="Ubiquitin-like" evidence="7">
    <location>
        <begin position="170"/>
        <end position="266"/>
    </location>
</feature>
<feature type="binding site" evidence="1">
    <location>
        <position position="18"/>
    </location>
    <ligand>
        <name>Zn(2+)</name>
        <dbReference type="ChEBI" id="CHEBI:29105"/>
        <label>1</label>
    </ligand>
</feature>
<feature type="binding site" evidence="1">
    <location>
        <position position="21"/>
    </location>
    <ligand>
        <name>Zn(2+)</name>
        <dbReference type="ChEBI" id="CHEBI:29105"/>
        <label>1</label>
    </ligand>
</feature>
<feature type="binding site" evidence="1">
    <location>
        <position position="31"/>
    </location>
    <ligand>
        <name>Zn(2+)</name>
        <dbReference type="ChEBI" id="CHEBI:29105"/>
        <label>2</label>
    </ligand>
</feature>
<feature type="binding site" evidence="1">
    <location>
        <position position="34"/>
    </location>
    <ligand>
        <name>Zn(2+)</name>
        <dbReference type="ChEBI" id="CHEBI:29105"/>
        <label>2</label>
    </ligand>
</feature>
<feature type="binding site" evidence="1">
    <location>
        <position position="39"/>
    </location>
    <ligand>
        <name>Zn(2+)</name>
        <dbReference type="ChEBI" id="CHEBI:29105"/>
        <label>1</label>
    </ligand>
</feature>
<feature type="binding site" evidence="1">
    <location>
        <position position="42"/>
    </location>
    <ligand>
        <name>Zn(2+)</name>
        <dbReference type="ChEBI" id="CHEBI:29105"/>
        <label>1</label>
    </ligand>
</feature>
<feature type="binding site" evidence="1">
    <location>
        <position position="48"/>
    </location>
    <ligand>
        <name>Zn(2+)</name>
        <dbReference type="ChEBI" id="CHEBI:29105"/>
        <label>2</label>
    </ligand>
</feature>
<feature type="binding site" evidence="1">
    <location>
        <position position="50"/>
    </location>
    <ligand>
        <name>Zn(2+)</name>
        <dbReference type="ChEBI" id="CHEBI:29105"/>
        <label>2</label>
    </ligand>
</feature>
<feature type="modified residue" description="Phosphoserine" evidence="9 10">
    <location>
        <position position="273"/>
    </location>
</feature>
<feature type="strand" evidence="11">
    <location>
        <begin position="19"/>
        <end position="21"/>
    </location>
</feature>
<feature type="strand" evidence="11">
    <location>
        <begin position="24"/>
        <end position="27"/>
    </location>
</feature>
<feature type="turn" evidence="11">
    <location>
        <begin position="32"/>
        <end position="34"/>
    </location>
</feature>
<feature type="helix" evidence="11">
    <location>
        <begin position="40"/>
        <end position="42"/>
    </location>
</feature>
<feature type="helix" evidence="11">
    <location>
        <begin position="46"/>
        <end position="48"/>
    </location>
</feature>
<feature type="helix" evidence="11">
    <location>
        <begin position="51"/>
        <end position="55"/>
    </location>
</feature>
<keyword id="KW-0002">3D-structure</keyword>
<keyword id="KW-0963">Cytoplasm</keyword>
<keyword id="KW-0479">Metal-binding</keyword>
<keyword id="KW-0539">Nucleus</keyword>
<keyword id="KW-0597">Phosphoprotein</keyword>
<keyword id="KW-1185">Reference proteome</keyword>
<keyword id="KW-0346">Stress response</keyword>
<keyword id="KW-0862">Zinc</keyword>
<keyword id="KW-0863">Zinc-finger</keyword>
<accession>P53899</accession>
<accession>D6W128</accession>
<name>CUZ1_YEAST</name>